<comment type="function">
    <text evidence="1">Catalyzes the transfer of glucose from UDP-glucose to ecdysteroids which are insect molting hormones. Expression of egt interferes with normal insect development and block molting (By similarity).</text>
</comment>
<comment type="similarity">
    <text evidence="3">Belongs to the UDP-glycosyltransferase family.</text>
</comment>
<keyword id="KW-0328">Glycosyltransferase</keyword>
<keyword id="KW-0732">Signal</keyword>
<keyword id="KW-0808">Transferase</keyword>
<feature type="signal peptide" evidence="2">
    <location>
        <begin position="1"/>
        <end position="31"/>
    </location>
</feature>
<feature type="chain" id="PRO_0000036063" description="Ecdysteroid UDP-glucosyltransferase">
    <location>
        <begin position="32"/>
        <end position="515"/>
    </location>
</feature>
<gene>
    <name type="primary">EGT</name>
    <name type="synonym">UGT21A7</name>
</gene>
<name>UDPE_NPVSL</name>
<organism>
    <name type="scientific">Spodoptera littoralis nuclear polyhedrosis virus</name>
    <name type="common">SlNPV</name>
    <dbReference type="NCBI Taxonomy" id="10456"/>
    <lineage>
        <taxon>Viruses</taxon>
        <taxon>Viruses incertae sedis</taxon>
        <taxon>Naldaviricetes</taxon>
        <taxon>Lefavirales</taxon>
        <taxon>Baculoviridae</taxon>
        <taxon>Alphabaculovirus</taxon>
        <taxon>Alphabaculovirus splittoralis</taxon>
    </lineage>
</organism>
<evidence type="ECO:0000250" key="1"/>
<evidence type="ECO:0000255" key="2"/>
<evidence type="ECO:0000305" key="3"/>
<reference key="1">
    <citation type="journal article" date="1995" name="Virus Genes">
        <title>Identification and nucleotide sequence of an ecdysteroid UDP-glucosyltransferase gene of Spodoptera littoralis multicapsid nuclear polyhedrosis virus.</title>
        <authorList>
            <person name="Faktor O."/>
            <person name="Toister-Achituv M."/>
            <person name="Kamensky B."/>
        </authorList>
    </citation>
    <scope>NUCLEOTIDE SEQUENCE [GENOMIC DNA]</scope>
    <source>
        <strain>E15</strain>
    </source>
</reference>
<proteinExistence type="inferred from homology"/>
<dbReference type="EC" id="2.4.1.-"/>
<dbReference type="EMBL" id="X84701">
    <property type="protein sequence ID" value="CAA59174.1"/>
    <property type="molecule type" value="Genomic_DNA"/>
</dbReference>
<dbReference type="PIR" id="S52453">
    <property type="entry name" value="S52453"/>
</dbReference>
<dbReference type="SMR" id="Q88168"/>
<dbReference type="CAZy" id="GT1">
    <property type="family name" value="Glycosyltransferase Family 1"/>
</dbReference>
<dbReference type="GO" id="GO:0008194">
    <property type="term" value="F:UDP-glycosyltransferase activity"/>
    <property type="evidence" value="ECO:0007669"/>
    <property type="project" value="InterPro"/>
</dbReference>
<dbReference type="CDD" id="cd03784">
    <property type="entry name" value="GT1_Gtf-like"/>
    <property type="match status" value="1"/>
</dbReference>
<dbReference type="FunFam" id="3.40.50.2000:FF:000050">
    <property type="entry name" value="UDP-glucuronosyltransferase"/>
    <property type="match status" value="1"/>
</dbReference>
<dbReference type="Gene3D" id="3.40.50.2000">
    <property type="entry name" value="Glycogen Phosphorylase B"/>
    <property type="match status" value="1"/>
</dbReference>
<dbReference type="InterPro" id="IPR016224">
    <property type="entry name" value="Ecdysteroid_UDP-Glc_Trfase"/>
</dbReference>
<dbReference type="InterPro" id="IPR050271">
    <property type="entry name" value="UDP-glycosyltransferase"/>
</dbReference>
<dbReference type="InterPro" id="IPR002213">
    <property type="entry name" value="UDP_glucos_trans"/>
</dbReference>
<dbReference type="InterPro" id="IPR035595">
    <property type="entry name" value="UDP_glycos_trans_CS"/>
</dbReference>
<dbReference type="PANTHER" id="PTHR48043">
    <property type="entry name" value="EG:EG0003.4 PROTEIN-RELATED"/>
    <property type="match status" value="1"/>
</dbReference>
<dbReference type="PANTHER" id="PTHR48043:SF145">
    <property type="entry name" value="FI06409P-RELATED"/>
    <property type="match status" value="1"/>
</dbReference>
<dbReference type="Pfam" id="PF00201">
    <property type="entry name" value="UDPGT"/>
    <property type="match status" value="1"/>
</dbReference>
<dbReference type="PIRSF" id="PIRSF000476">
    <property type="entry name" value="Ecdystd_UDP_glucosyltfrase"/>
    <property type="match status" value="1"/>
</dbReference>
<dbReference type="SUPFAM" id="SSF53756">
    <property type="entry name" value="UDP-Glycosyltransferase/glycogen phosphorylase"/>
    <property type="match status" value="1"/>
</dbReference>
<dbReference type="PROSITE" id="PS00375">
    <property type="entry name" value="UDPGT"/>
    <property type="match status" value="1"/>
</dbReference>
<protein>
    <recommendedName>
        <fullName>Ecdysteroid UDP-glucosyltransferase</fullName>
        <ecNumber>2.4.1.-</ecNumber>
    </recommendedName>
</protein>
<organismHost>
    <name type="scientific">Lepidoptera</name>
    <name type="common">butterflies and moths</name>
    <dbReference type="NCBI Taxonomy" id="7088"/>
</organismHost>
<accession>Q88168</accession>
<sequence>MKMIILVVSLHVLRNSAAVRVLCMFPTPSYSHQTVFDVYVNALLRRGHSLVVISPKIHNHNHGHRHHRHENLTEIDVGSVTNNFFKRLLQDSKVSRKRGIVSDSSTVTRVNYLGLARMISAQFEHEQVKRLLRSNQTFDVIVIEAFVSYPLILSYFFKDTPVIQISSGHGTAENFETMGAVARHPVYYPNMWRDRFKGLSVWQTVRQVFTEIRLYMEFSQLDADQSAMMKRQFGSKVPDVDALRKNVHMMFVNTHPVFDTNRPVPSNVQYLGGIHIDPAVTSVADEIDNDLAEFLENSTMGVVYVSLGSSVRASDMDSNMLNVFVETFRSIPYRVLWKVDKSDKIFDNIPSNVLIQRWFPQRRVLKHRNVKVFITQGGVQSTDEAIDAGVPMFGVPIMGDQFYNVYMYETYGIGRGVDTLTVDARQLTEIVMDVADNEKYKNGTLWLRDAIMDQPMRPLEKAVWYTEHVARRKGAKKHLGTRAANVTYSKYAMFDLILPMLITIFSTYLQKILSI</sequence>